<name>GPDA_PARUW</name>
<organism>
    <name type="scientific">Protochlamydia amoebophila (strain UWE25)</name>
    <dbReference type="NCBI Taxonomy" id="264201"/>
    <lineage>
        <taxon>Bacteria</taxon>
        <taxon>Pseudomonadati</taxon>
        <taxon>Chlamydiota</taxon>
        <taxon>Chlamydiia</taxon>
        <taxon>Parachlamydiales</taxon>
        <taxon>Parachlamydiaceae</taxon>
        <taxon>Candidatus Protochlamydia</taxon>
    </lineage>
</organism>
<accession>Q6MF42</accession>
<comment type="function">
    <text evidence="1">Catalyzes the reduction of the glycolytic intermediate dihydroxyacetone phosphate (DHAP) to sn-glycerol 3-phosphate (G3P), the key precursor for phospholipid synthesis.</text>
</comment>
<comment type="catalytic activity">
    <reaction evidence="1">
        <text>sn-glycerol 3-phosphate + NAD(+) = dihydroxyacetone phosphate + NADH + H(+)</text>
        <dbReference type="Rhea" id="RHEA:11092"/>
        <dbReference type="ChEBI" id="CHEBI:15378"/>
        <dbReference type="ChEBI" id="CHEBI:57540"/>
        <dbReference type="ChEBI" id="CHEBI:57597"/>
        <dbReference type="ChEBI" id="CHEBI:57642"/>
        <dbReference type="ChEBI" id="CHEBI:57945"/>
        <dbReference type="EC" id="1.1.1.94"/>
    </reaction>
    <physiologicalReaction direction="right-to-left" evidence="1">
        <dbReference type="Rhea" id="RHEA:11094"/>
    </physiologicalReaction>
</comment>
<comment type="catalytic activity">
    <reaction evidence="1">
        <text>sn-glycerol 3-phosphate + NADP(+) = dihydroxyacetone phosphate + NADPH + H(+)</text>
        <dbReference type="Rhea" id="RHEA:11096"/>
        <dbReference type="ChEBI" id="CHEBI:15378"/>
        <dbReference type="ChEBI" id="CHEBI:57597"/>
        <dbReference type="ChEBI" id="CHEBI:57642"/>
        <dbReference type="ChEBI" id="CHEBI:57783"/>
        <dbReference type="ChEBI" id="CHEBI:58349"/>
        <dbReference type="EC" id="1.1.1.94"/>
    </reaction>
    <physiologicalReaction direction="right-to-left" evidence="1">
        <dbReference type="Rhea" id="RHEA:11098"/>
    </physiologicalReaction>
</comment>
<comment type="pathway">
    <text evidence="1">Membrane lipid metabolism; glycerophospholipid metabolism.</text>
</comment>
<comment type="subcellular location">
    <subcellularLocation>
        <location evidence="1">Cytoplasm</location>
    </subcellularLocation>
</comment>
<comment type="similarity">
    <text evidence="1">Belongs to the NAD-dependent glycerol-3-phosphate dehydrogenase family.</text>
</comment>
<gene>
    <name evidence="1" type="primary">gpsA</name>
    <name type="ordered locus">pc0083</name>
</gene>
<protein>
    <recommendedName>
        <fullName evidence="1">Glycerol-3-phosphate dehydrogenase [NAD(P)+]</fullName>
        <ecNumber evidence="1">1.1.1.94</ecNumber>
    </recommendedName>
    <alternativeName>
        <fullName evidence="1">NAD(P)(+)-dependent glycerol-3-phosphate dehydrogenase</fullName>
    </alternativeName>
    <alternativeName>
        <fullName evidence="1">NAD(P)H-dependent dihydroxyacetone-phosphate reductase</fullName>
    </alternativeName>
</protein>
<sequence>MKKIGYLGLGAWGYCLASLLASKGHKVVCWTTKPELAKHLTDTREHPLLAGHLSKGEMTFTTDMSEALKDVDMIVESVTSAGLRSVFEQVRSLGLPNCPIVITSKGIEQDTGMILPEVVIEVLGEEFRSLIGFLSGPSFAQEVIRELPTSVVGTGYTVEVIQEICETFMTPTFRVYPNTDILGVAFGGALKNIIGIACGISDGLALGCSSKAALMTRGLHEIRKLSVACGCKAETLNGLAGMGDLCVTCSSPISRNFRFGTLLAQGLSTEQARNRIGMVVEGAYTCVSALQLSKQHKIIMPISEAVYNIIQGTIKPIEAVSALMKRTIKEEHL</sequence>
<reference key="1">
    <citation type="journal article" date="2004" name="Science">
        <title>Illuminating the evolutionary history of chlamydiae.</title>
        <authorList>
            <person name="Horn M."/>
            <person name="Collingro A."/>
            <person name="Schmitz-Esser S."/>
            <person name="Beier C.L."/>
            <person name="Purkhold U."/>
            <person name="Fartmann B."/>
            <person name="Brandt P."/>
            <person name="Nyakatura G.J."/>
            <person name="Droege M."/>
            <person name="Frishman D."/>
            <person name="Rattei T."/>
            <person name="Mewes H.-W."/>
            <person name="Wagner M."/>
        </authorList>
    </citation>
    <scope>NUCLEOTIDE SEQUENCE [LARGE SCALE GENOMIC DNA]</scope>
    <source>
        <strain>UWE25</strain>
    </source>
</reference>
<keyword id="KW-0963">Cytoplasm</keyword>
<keyword id="KW-0444">Lipid biosynthesis</keyword>
<keyword id="KW-0443">Lipid metabolism</keyword>
<keyword id="KW-0520">NAD</keyword>
<keyword id="KW-0521">NADP</keyword>
<keyword id="KW-0547">Nucleotide-binding</keyword>
<keyword id="KW-0560">Oxidoreductase</keyword>
<keyword id="KW-0594">Phospholipid biosynthesis</keyword>
<keyword id="KW-1208">Phospholipid metabolism</keyword>
<keyword id="KW-1185">Reference proteome</keyword>
<proteinExistence type="inferred from homology"/>
<evidence type="ECO:0000255" key="1">
    <source>
        <dbReference type="HAMAP-Rule" id="MF_00394"/>
    </source>
</evidence>
<feature type="chain" id="PRO_0000138004" description="Glycerol-3-phosphate dehydrogenase [NAD(P)+]">
    <location>
        <begin position="1"/>
        <end position="333"/>
    </location>
</feature>
<feature type="active site" description="Proton acceptor" evidence="1">
    <location>
        <position position="191"/>
    </location>
</feature>
<feature type="binding site" evidence="1">
    <location>
        <position position="12"/>
    </location>
    <ligand>
        <name>NADPH</name>
        <dbReference type="ChEBI" id="CHEBI:57783"/>
    </ligand>
</feature>
<feature type="binding site" evidence="1">
    <location>
        <position position="33"/>
    </location>
    <ligand>
        <name>NADPH</name>
        <dbReference type="ChEBI" id="CHEBI:57783"/>
    </ligand>
</feature>
<feature type="binding site" evidence="1">
    <location>
        <position position="105"/>
    </location>
    <ligand>
        <name>NADPH</name>
        <dbReference type="ChEBI" id="CHEBI:57783"/>
    </ligand>
</feature>
<feature type="binding site" evidence="1">
    <location>
        <position position="105"/>
    </location>
    <ligand>
        <name>sn-glycerol 3-phosphate</name>
        <dbReference type="ChEBI" id="CHEBI:57597"/>
    </ligand>
</feature>
<feature type="binding site" evidence="1">
    <location>
        <position position="136"/>
    </location>
    <ligand>
        <name>sn-glycerol 3-phosphate</name>
        <dbReference type="ChEBI" id="CHEBI:57597"/>
    </ligand>
</feature>
<feature type="binding site" evidence="1">
    <location>
        <position position="138"/>
    </location>
    <ligand>
        <name>sn-glycerol 3-phosphate</name>
        <dbReference type="ChEBI" id="CHEBI:57597"/>
    </ligand>
</feature>
<feature type="binding site" evidence="1">
    <location>
        <position position="140"/>
    </location>
    <ligand>
        <name>NADPH</name>
        <dbReference type="ChEBI" id="CHEBI:57783"/>
    </ligand>
</feature>
<feature type="binding site" evidence="1">
    <location>
        <position position="191"/>
    </location>
    <ligand>
        <name>sn-glycerol 3-phosphate</name>
        <dbReference type="ChEBI" id="CHEBI:57597"/>
    </ligand>
</feature>
<feature type="binding site" evidence="1">
    <location>
        <position position="244"/>
    </location>
    <ligand>
        <name>sn-glycerol 3-phosphate</name>
        <dbReference type="ChEBI" id="CHEBI:57597"/>
    </ligand>
</feature>
<feature type="binding site" evidence="1">
    <location>
        <position position="254"/>
    </location>
    <ligand>
        <name>sn-glycerol 3-phosphate</name>
        <dbReference type="ChEBI" id="CHEBI:57597"/>
    </ligand>
</feature>
<feature type="binding site" evidence="1">
    <location>
        <position position="255"/>
    </location>
    <ligand>
        <name>NADPH</name>
        <dbReference type="ChEBI" id="CHEBI:57783"/>
    </ligand>
</feature>
<feature type="binding site" evidence="1">
    <location>
        <position position="255"/>
    </location>
    <ligand>
        <name>sn-glycerol 3-phosphate</name>
        <dbReference type="ChEBI" id="CHEBI:57597"/>
    </ligand>
</feature>
<feature type="binding site" evidence="1">
    <location>
        <position position="256"/>
    </location>
    <ligand>
        <name>sn-glycerol 3-phosphate</name>
        <dbReference type="ChEBI" id="CHEBI:57597"/>
    </ligand>
</feature>
<feature type="binding site" evidence="1">
    <location>
        <position position="279"/>
    </location>
    <ligand>
        <name>NADPH</name>
        <dbReference type="ChEBI" id="CHEBI:57783"/>
    </ligand>
</feature>
<feature type="binding site" evidence="1">
    <location>
        <position position="281"/>
    </location>
    <ligand>
        <name>NADPH</name>
        <dbReference type="ChEBI" id="CHEBI:57783"/>
    </ligand>
</feature>
<dbReference type="EC" id="1.1.1.94" evidence="1"/>
<dbReference type="EMBL" id="BX908798">
    <property type="protein sequence ID" value="CAF22807.1"/>
    <property type="molecule type" value="Genomic_DNA"/>
</dbReference>
<dbReference type="RefSeq" id="WP_011174633.1">
    <property type="nucleotide sequence ID" value="NC_005861.2"/>
</dbReference>
<dbReference type="SMR" id="Q6MF42"/>
<dbReference type="STRING" id="264201.pc0083"/>
<dbReference type="KEGG" id="pcu:PC_RS00400"/>
<dbReference type="eggNOG" id="COG0240">
    <property type="taxonomic scope" value="Bacteria"/>
</dbReference>
<dbReference type="HOGENOM" id="CLU_033449_0_2_0"/>
<dbReference type="OrthoDB" id="9812273at2"/>
<dbReference type="UniPathway" id="UPA00940"/>
<dbReference type="Proteomes" id="UP000000529">
    <property type="component" value="Chromosome"/>
</dbReference>
<dbReference type="GO" id="GO:0005829">
    <property type="term" value="C:cytosol"/>
    <property type="evidence" value="ECO:0007669"/>
    <property type="project" value="TreeGrafter"/>
</dbReference>
<dbReference type="GO" id="GO:0047952">
    <property type="term" value="F:glycerol-3-phosphate dehydrogenase [NAD(P)+] activity"/>
    <property type="evidence" value="ECO:0007669"/>
    <property type="project" value="UniProtKB-UniRule"/>
</dbReference>
<dbReference type="GO" id="GO:0051287">
    <property type="term" value="F:NAD binding"/>
    <property type="evidence" value="ECO:0007669"/>
    <property type="project" value="InterPro"/>
</dbReference>
<dbReference type="GO" id="GO:0005975">
    <property type="term" value="P:carbohydrate metabolic process"/>
    <property type="evidence" value="ECO:0007669"/>
    <property type="project" value="InterPro"/>
</dbReference>
<dbReference type="GO" id="GO:0046167">
    <property type="term" value="P:glycerol-3-phosphate biosynthetic process"/>
    <property type="evidence" value="ECO:0007669"/>
    <property type="project" value="UniProtKB-UniRule"/>
</dbReference>
<dbReference type="GO" id="GO:0046168">
    <property type="term" value="P:glycerol-3-phosphate catabolic process"/>
    <property type="evidence" value="ECO:0007669"/>
    <property type="project" value="InterPro"/>
</dbReference>
<dbReference type="GO" id="GO:0006650">
    <property type="term" value="P:glycerophospholipid metabolic process"/>
    <property type="evidence" value="ECO:0007669"/>
    <property type="project" value="UniProtKB-UniRule"/>
</dbReference>
<dbReference type="GO" id="GO:0008654">
    <property type="term" value="P:phospholipid biosynthetic process"/>
    <property type="evidence" value="ECO:0007669"/>
    <property type="project" value="UniProtKB-KW"/>
</dbReference>
<dbReference type="FunFam" id="1.10.1040.10:FF:000001">
    <property type="entry name" value="Glycerol-3-phosphate dehydrogenase [NAD(P)+]"/>
    <property type="match status" value="1"/>
</dbReference>
<dbReference type="Gene3D" id="1.10.1040.10">
    <property type="entry name" value="N-(1-d-carboxylethyl)-l-norvaline Dehydrogenase, domain 2"/>
    <property type="match status" value="1"/>
</dbReference>
<dbReference type="Gene3D" id="3.40.50.720">
    <property type="entry name" value="NAD(P)-binding Rossmann-like Domain"/>
    <property type="match status" value="1"/>
</dbReference>
<dbReference type="HAMAP" id="MF_00394">
    <property type="entry name" value="NAD_Glyc3P_dehydrog"/>
    <property type="match status" value="1"/>
</dbReference>
<dbReference type="InterPro" id="IPR008927">
    <property type="entry name" value="6-PGluconate_DH-like_C_sf"/>
</dbReference>
<dbReference type="InterPro" id="IPR013328">
    <property type="entry name" value="6PGD_dom2"/>
</dbReference>
<dbReference type="InterPro" id="IPR006168">
    <property type="entry name" value="G3P_DH_NAD-dep"/>
</dbReference>
<dbReference type="InterPro" id="IPR006109">
    <property type="entry name" value="G3P_DH_NAD-dep_C"/>
</dbReference>
<dbReference type="InterPro" id="IPR011128">
    <property type="entry name" value="G3P_DH_NAD-dep_N"/>
</dbReference>
<dbReference type="InterPro" id="IPR036291">
    <property type="entry name" value="NAD(P)-bd_dom_sf"/>
</dbReference>
<dbReference type="NCBIfam" id="NF000940">
    <property type="entry name" value="PRK00094.1-2"/>
    <property type="match status" value="1"/>
</dbReference>
<dbReference type="NCBIfam" id="NF000942">
    <property type="entry name" value="PRK00094.1-4"/>
    <property type="match status" value="1"/>
</dbReference>
<dbReference type="PANTHER" id="PTHR11728">
    <property type="entry name" value="GLYCEROL-3-PHOSPHATE DEHYDROGENASE"/>
    <property type="match status" value="1"/>
</dbReference>
<dbReference type="PANTHER" id="PTHR11728:SF1">
    <property type="entry name" value="GLYCEROL-3-PHOSPHATE DEHYDROGENASE [NAD(+)] 2, CHLOROPLASTIC"/>
    <property type="match status" value="1"/>
</dbReference>
<dbReference type="Pfam" id="PF07479">
    <property type="entry name" value="NAD_Gly3P_dh_C"/>
    <property type="match status" value="1"/>
</dbReference>
<dbReference type="Pfam" id="PF01210">
    <property type="entry name" value="NAD_Gly3P_dh_N"/>
    <property type="match status" value="1"/>
</dbReference>
<dbReference type="PIRSF" id="PIRSF000114">
    <property type="entry name" value="Glycerol-3-P_dh"/>
    <property type="match status" value="1"/>
</dbReference>
<dbReference type="PRINTS" id="PR00077">
    <property type="entry name" value="GPDHDRGNASE"/>
</dbReference>
<dbReference type="SUPFAM" id="SSF48179">
    <property type="entry name" value="6-phosphogluconate dehydrogenase C-terminal domain-like"/>
    <property type="match status" value="1"/>
</dbReference>
<dbReference type="SUPFAM" id="SSF51735">
    <property type="entry name" value="NAD(P)-binding Rossmann-fold domains"/>
    <property type="match status" value="1"/>
</dbReference>
<dbReference type="PROSITE" id="PS00957">
    <property type="entry name" value="NAD_G3PDH"/>
    <property type="match status" value="1"/>
</dbReference>